<protein>
    <recommendedName>
        <fullName evidence="1">Small ribosomal subunit protein uS10</fullName>
    </recommendedName>
    <alternativeName>
        <fullName evidence="2">30S ribosomal protein S10</fullName>
    </alternativeName>
</protein>
<sequence length="103" mass="11828">MQQQKIRIRLKAFDYRLIDQSAAEIVDTAKRTGAIVRGPVPLPTRIQRFDILRSPHVNKTSRDQLEIRTHQRLMDIVDPTDKTVDALMKLDLPAGVDVEIKLQ</sequence>
<gene>
    <name evidence="1" type="primary">rpsJ</name>
    <name type="ordered locus">BMA2633</name>
</gene>
<name>RS10_BURMA</name>
<proteinExistence type="inferred from homology"/>
<dbReference type="EMBL" id="CP000010">
    <property type="protein sequence ID" value="AAU47871.1"/>
    <property type="molecule type" value="Genomic_DNA"/>
</dbReference>
<dbReference type="RefSeq" id="WP_004199280.1">
    <property type="nucleotide sequence ID" value="NC_006348.1"/>
</dbReference>
<dbReference type="RefSeq" id="YP_104167.1">
    <property type="nucleotide sequence ID" value="NC_006348.1"/>
</dbReference>
<dbReference type="SMR" id="Q62GK4"/>
<dbReference type="GeneID" id="98107161"/>
<dbReference type="KEGG" id="bma:BMA2633"/>
<dbReference type="PATRIC" id="fig|243160.12.peg.2704"/>
<dbReference type="eggNOG" id="COG0051">
    <property type="taxonomic scope" value="Bacteria"/>
</dbReference>
<dbReference type="HOGENOM" id="CLU_122625_1_3_4"/>
<dbReference type="PRO" id="PR:Q62GK4"/>
<dbReference type="Proteomes" id="UP000006693">
    <property type="component" value="Chromosome 1"/>
</dbReference>
<dbReference type="GO" id="GO:1990904">
    <property type="term" value="C:ribonucleoprotein complex"/>
    <property type="evidence" value="ECO:0007669"/>
    <property type="project" value="UniProtKB-KW"/>
</dbReference>
<dbReference type="GO" id="GO:0005840">
    <property type="term" value="C:ribosome"/>
    <property type="evidence" value="ECO:0007669"/>
    <property type="project" value="UniProtKB-KW"/>
</dbReference>
<dbReference type="GO" id="GO:0003735">
    <property type="term" value="F:structural constituent of ribosome"/>
    <property type="evidence" value="ECO:0007669"/>
    <property type="project" value="InterPro"/>
</dbReference>
<dbReference type="GO" id="GO:0000049">
    <property type="term" value="F:tRNA binding"/>
    <property type="evidence" value="ECO:0007669"/>
    <property type="project" value="UniProtKB-UniRule"/>
</dbReference>
<dbReference type="GO" id="GO:0006412">
    <property type="term" value="P:translation"/>
    <property type="evidence" value="ECO:0007669"/>
    <property type="project" value="UniProtKB-UniRule"/>
</dbReference>
<dbReference type="FunFam" id="3.30.70.600:FF:000001">
    <property type="entry name" value="30S ribosomal protein S10"/>
    <property type="match status" value="1"/>
</dbReference>
<dbReference type="Gene3D" id="3.30.70.600">
    <property type="entry name" value="Ribosomal protein S10 domain"/>
    <property type="match status" value="1"/>
</dbReference>
<dbReference type="HAMAP" id="MF_00508">
    <property type="entry name" value="Ribosomal_uS10"/>
    <property type="match status" value="1"/>
</dbReference>
<dbReference type="InterPro" id="IPR001848">
    <property type="entry name" value="Ribosomal_uS10"/>
</dbReference>
<dbReference type="InterPro" id="IPR018268">
    <property type="entry name" value="Ribosomal_uS10_CS"/>
</dbReference>
<dbReference type="InterPro" id="IPR027486">
    <property type="entry name" value="Ribosomal_uS10_dom"/>
</dbReference>
<dbReference type="InterPro" id="IPR036838">
    <property type="entry name" value="Ribosomal_uS10_dom_sf"/>
</dbReference>
<dbReference type="NCBIfam" id="NF001861">
    <property type="entry name" value="PRK00596.1"/>
    <property type="match status" value="1"/>
</dbReference>
<dbReference type="NCBIfam" id="TIGR01049">
    <property type="entry name" value="rpsJ_bact"/>
    <property type="match status" value="1"/>
</dbReference>
<dbReference type="PANTHER" id="PTHR11700">
    <property type="entry name" value="30S RIBOSOMAL PROTEIN S10 FAMILY MEMBER"/>
    <property type="match status" value="1"/>
</dbReference>
<dbReference type="Pfam" id="PF00338">
    <property type="entry name" value="Ribosomal_S10"/>
    <property type="match status" value="1"/>
</dbReference>
<dbReference type="PRINTS" id="PR00971">
    <property type="entry name" value="RIBOSOMALS10"/>
</dbReference>
<dbReference type="SMART" id="SM01403">
    <property type="entry name" value="Ribosomal_S10"/>
    <property type="match status" value="1"/>
</dbReference>
<dbReference type="SUPFAM" id="SSF54999">
    <property type="entry name" value="Ribosomal protein S10"/>
    <property type="match status" value="1"/>
</dbReference>
<dbReference type="PROSITE" id="PS00361">
    <property type="entry name" value="RIBOSOMAL_S10"/>
    <property type="match status" value="1"/>
</dbReference>
<accession>Q62GK4</accession>
<keyword id="KW-1185">Reference proteome</keyword>
<keyword id="KW-0687">Ribonucleoprotein</keyword>
<keyword id="KW-0689">Ribosomal protein</keyword>
<feature type="chain" id="PRO_0000237023" description="Small ribosomal subunit protein uS10">
    <location>
        <begin position="1"/>
        <end position="103"/>
    </location>
</feature>
<evidence type="ECO:0000255" key="1">
    <source>
        <dbReference type="HAMAP-Rule" id="MF_00508"/>
    </source>
</evidence>
<evidence type="ECO:0000305" key="2"/>
<organism>
    <name type="scientific">Burkholderia mallei (strain ATCC 23344)</name>
    <dbReference type="NCBI Taxonomy" id="243160"/>
    <lineage>
        <taxon>Bacteria</taxon>
        <taxon>Pseudomonadati</taxon>
        <taxon>Pseudomonadota</taxon>
        <taxon>Betaproteobacteria</taxon>
        <taxon>Burkholderiales</taxon>
        <taxon>Burkholderiaceae</taxon>
        <taxon>Burkholderia</taxon>
        <taxon>pseudomallei group</taxon>
    </lineage>
</organism>
<reference key="1">
    <citation type="journal article" date="2004" name="Proc. Natl. Acad. Sci. U.S.A.">
        <title>Structural flexibility in the Burkholderia mallei genome.</title>
        <authorList>
            <person name="Nierman W.C."/>
            <person name="DeShazer D."/>
            <person name="Kim H.S."/>
            <person name="Tettelin H."/>
            <person name="Nelson K.E."/>
            <person name="Feldblyum T.V."/>
            <person name="Ulrich R.L."/>
            <person name="Ronning C.M."/>
            <person name="Brinkac L.M."/>
            <person name="Daugherty S.C."/>
            <person name="Davidsen T.D."/>
            <person name="DeBoy R.T."/>
            <person name="Dimitrov G."/>
            <person name="Dodson R.J."/>
            <person name="Durkin A.S."/>
            <person name="Gwinn M.L."/>
            <person name="Haft D.H."/>
            <person name="Khouri H.M."/>
            <person name="Kolonay J.F."/>
            <person name="Madupu R."/>
            <person name="Mohammoud Y."/>
            <person name="Nelson W.C."/>
            <person name="Radune D."/>
            <person name="Romero C.M."/>
            <person name="Sarria S."/>
            <person name="Selengut J."/>
            <person name="Shamblin C."/>
            <person name="Sullivan S.A."/>
            <person name="White O."/>
            <person name="Yu Y."/>
            <person name="Zafar N."/>
            <person name="Zhou L."/>
            <person name="Fraser C.M."/>
        </authorList>
    </citation>
    <scope>NUCLEOTIDE SEQUENCE [LARGE SCALE GENOMIC DNA]</scope>
    <source>
        <strain>ATCC 23344</strain>
    </source>
</reference>
<comment type="function">
    <text evidence="1">Involved in the binding of tRNA to the ribosomes.</text>
</comment>
<comment type="subunit">
    <text evidence="1">Part of the 30S ribosomal subunit.</text>
</comment>
<comment type="similarity">
    <text evidence="1">Belongs to the universal ribosomal protein uS10 family.</text>
</comment>